<comment type="function">
    <text evidence="5 6 7 8 9">Deubiquitinase that plays a role in different processes including cell cycle regulation, mitophagy or endoplasmic reticulum stress (PubMed:26348204, PubMed:29449677, PubMed:37004621). Inhibits TNFalpha-induced NF-kappa-B activation through stabilizing TNIP2 protein via deubiquitination (PubMed:26348204). Plays an essential role during mitosis by deubiquitinating and thereby regulating the levels of Aurora B/AURKB protein (PubMed:29449677). In addition, regulates the protein levels of other key component of the chromosomal passenger complex (CPC) such as survivin/BIRC5 or Borealin/CDCA8 by enhancing their stability (PubMed:34438346). Regulates the degradation of mitochondria through the process of autophagy termed mitophagy (PubMed:25915564).</text>
</comment>
<comment type="catalytic activity">
    <reaction evidence="4 6 8 9">
        <text>Thiol-dependent hydrolysis of ester, thioester, amide, peptide and isopeptide bonds formed by the C-terminal Gly of ubiquitin (a 76-residue protein attached to proteins as an intracellular targeting signal).</text>
        <dbReference type="EC" id="3.4.19.12"/>
    </reaction>
</comment>
<comment type="subunit">
    <text evidence="9">Homodimer (via C-terminal region). Interacts with HSP90AA1.</text>
</comment>
<comment type="subcellular location">
    <subcellularLocation>
        <location evidence="5">Cytoplasm</location>
    </subcellularLocation>
    <subcellularLocation>
        <location evidence="5">Mitochondrion</location>
    </subcellularLocation>
    <text evidence="5">Only associates with polarized mitochondria, and rapidly translocates to the cytosol during mitophagy.</text>
</comment>
<comment type="alternative products">
    <event type="alternative splicing"/>
    <isoform>
        <id>Q9P2H5-1</id>
        <name>1</name>
        <sequence type="displayed"/>
    </isoform>
    <isoform>
        <id>Q9P2H5-2</id>
        <name>2</name>
        <sequence type="described" ref="VSP_040291"/>
    </isoform>
</comment>
<comment type="tissue specificity">
    <text evidence="4">Expressed in testis, pancreas and skeletal muscle.</text>
</comment>
<comment type="induction">
    <text evidence="7">By FOXM1 transcription factor.</text>
</comment>
<comment type="PTM">
    <text evidence="9">Ubiquitinated by CHIP/STUB1 in an HSP90-dependent manner; leading to proteasomal degradation. This ubiquitination can be reversed through auto-deubiquitinating activity.</text>
</comment>
<comment type="similarity">
    <text evidence="11">Belongs to the peptidase C19 family.</text>
</comment>
<comment type="sequence caution" evidence="11">
    <conflict type="erroneous initiation">
        <sequence resource="EMBL-CDS" id="BAA92610"/>
    </conflict>
    <text>Extended N-terminus.</text>
</comment>
<proteinExistence type="evidence at protein level"/>
<keyword id="KW-0002">3D-structure</keyword>
<keyword id="KW-0025">Alternative splicing</keyword>
<keyword id="KW-0963">Cytoplasm</keyword>
<keyword id="KW-0378">Hydrolase</keyword>
<keyword id="KW-0496">Mitochondrion</keyword>
<keyword id="KW-0597">Phosphoprotein</keyword>
<keyword id="KW-0645">Protease</keyword>
<keyword id="KW-1267">Proteomics identification</keyword>
<keyword id="KW-1185">Reference proteome</keyword>
<keyword id="KW-0788">Thiol protease</keyword>
<keyword id="KW-0832">Ubl conjugation</keyword>
<keyword id="KW-0833">Ubl conjugation pathway</keyword>
<name>UBP35_HUMAN</name>
<accession>Q9P2H5</accession>
<organism>
    <name type="scientific">Homo sapiens</name>
    <name type="common">Human</name>
    <dbReference type="NCBI Taxonomy" id="9606"/>
    <lineage>
        <taxon>Eukaryota</taxon>
        <taxon>Metazoa</taxon>
        <taxon>Chordata</taxon>
        <taxon>Craniata</taxon>
        <taxon>Vertebrata</taxon>
        <taxon>Euteleostomi</taxon>
        <taxon>Mammalia</taxon>
        <taxon>Eutheria</taxon>
        <taxon>Euarchontoglires</taxon>
        <taxon>Primates</taxon>
        <taxon>Haplorrhini</taxon>
        <taxon>Catarrhini</taxon>
        <taxon>Hominidae</taxon>
        <taxon>Homo</taxon>
    </lineage>
</organism>
<feature type="chain" id="PRO_0000080665" description="Ubiquitin carboxyl-terminal hydrolase 35">
    <location>
        <begin position="1"/>
        <end position="1018"/>
    </location>
</feature>
<feature type="domain" description="USP">
    <location>
        <begin position="441"/>
        <end position="926"/>
    </location>
</feature>
<feature type="region of interest" description="Disordered" evidence="3">
    <location>
        <begin position="544"/>
        <end position="566"/>
    </location>
</feature>
<feature type="region of interest" description="Disordered" evidence="3">
    <location>
        <begin position="610"/>
        <end position="757"/>
    </location>
</feature>
<feature type="region of interest" description="Disordered" evidence="3">
    <location>
        <begin position="984"/>
        <end position="1011"/>
    </location>
</feature>
<feature type="compositionally biased region" description="Pro residues" evidence="3">
    <location>
        <begin position="552"/>
        <end position="561"/>
    </location>
</feature>
<feature type="compositionally biased region" description="Basic and acidic residues" evidence="3">
    <location>
        <begin position="673"/>
        <end position="691"/>
    </location>
</feature>
<feature type="compositionally biased region" description="Basic and acidic residues" evidence="3">
    <location>
        <begin position="699"/>
        <end position="709"/>
    </location>
</feature>
<feature type="compositionally biased region" description="Basic and acidic residues" evidence="3">
    <location>
        <begin position="718"/>
        <end position="728"/>
    </location>
</feature>
<feature type="compositionally biased region" description="Gly residues" evidence="3">
    <location>
        <begin position="999"/>
        <end position="1011"/>
    </location>
</feature>
<feature type="active site" description="Nucleophile" evidence="1 2">
    <location>
        <position position="450"/>
    </location>
</feature>
<feature type="active site" description="Proton acceptor" evidence="1 2">
    <location>
        <position position="862"/>
    </location>
</feature>
<feature type="modified residue" description="Phosphoserine" evidence="12 13">
    <location>
        <position position="613"/>
    </location>
</feature>
<feature type="splice variant" id="VSP_040291" description="In isoform 2." evidence="10">
    <location>
        <begin position="1"/>
        <end position="269"/>
    </location>
</feature>
<feature type="sequence variant" id="VAR_057042" description="In dbSNP:rs2510044.">
    <original>V</original>
    <variation>M</variation>
    <location>
        <position position="236"/>
    </location>
</feature>
<feature type="mutagenesis site" description="Complete loss of catalytic activity." evidence="7 9">
    <original>C</original>
    <variation>A</variation>
    <location>
        <position position="450"/>
    </location>
</feature>
<feature type="mutagenesis site" description="Complete loss of catalytic activity." evidence="8">
    <original>C</original>
    <variation>S</variation>
    <location>
        <position position="450"/>
    </location>
</feature>
<feature type="sequence conflict" description="In Ref. 1; CAE51937." evidence="11" ref="1">
    <location>
        <position position="224"/>
    </location>
</feature>
<feature type="sequence conflict" description="In Ref. 1; CAE51937." evidence="11" ref="1">
    <original>D</original>
    <variation>E</variation>
    <location>
        <position position="464"/>
    </location>
</feature>
<feature type="helix" evidence="14">
    <location>
        <begin position="450"/>
        <end position="461"/>
    </location>
</feature>
<feature type="helix" evidence="14">
    <location>
        <begin position="463"/>
        <end position="470"/>
    </location>
</feature>
<feature type="helix" evidence="14">
    <location>
        <begin position="479"/>
        <end position="493"/>
    </location>
</feature>
<feature type="strand" evidence="14">
    <location>
        <begin position="496"/>
        <end position="499"/>
    </location>
</feature>
<feature type="helix" evidence="14">
    <location>
        <begin position="502"/>
        <end position="507"/>
    </location>
</feature>
<feature type="helix" evidence="14">
    <location>
        <begin position="521"/>
        <end position="549"/>
    </location>
</feature>
<feature type="helix" evidence="14">
    <location>
        <begin position="565"/>
        <end position="570"/>
    </location>
</feature>
<feature type="strand" evidence="14">
    <location>
        <begin position="572"/>
        <end position="580"/>
    </location>
</feature>
<feature type="turn" evidence="14">
    <location>
        <begin position="581"/>
        <end position="583"/>
    </location>
</feature>
<feature type="strand" evidence="14">
    <location>
        <begin position="586"/>
        <end position="598"/>
    </location>
</feature>
<feature type="helix" evidence="14">
    <location>
        <begin position="761"/>
        <end position="768"/>
    </location>
</feature>
<feature type="strand" evidence="14">
    <location>
        <begin position="772"/>
        <end position="774"/>
    </location>
</feature>
<feature type="helix" evidence="14">
    <location>
        <begin position="776"/>
        <end position="778"/>
    </location>
</feature>
<feature type="strand" evidence="14">
    <location>
        <begin position="780"/>
        <end position="782"/>
    </location>
</feature>
<feature type="turn" evidence="14">
    <location>
        <begin position="783"/>
        <end position="786"/>
    </location>
</feature>
<feature type="strand" evidence="14">
    <location>
        <begin position="787"/>
        <end position="789"/>
    </location>
</feature>
<feature type="strand" evidence="14">
    <location>
        <begin position="791"/>
        <end position="799"/>
    </location>
</feature>
<feature type="strand" evidence="14">
    <location>
        <begin position="802"/>
        <end position="808"/>
    </location>
</feature>
<feature type="strand" evidence="14">
    <location>
        <begin position="811"/>
        <end position="814"/>
    </location>
</feature>
<feature type="turn" evidence="14">
    <location>
        <begin position="815"/>
        <end position="818"/>
    </location>
</feature>
<feature type="strand" evidence="14">
    <location>
        <begin position="819"/>
        <end position="822"/>
    </location>
</feature>
<feature type="strand" evidence="14">
    <location>
        <begin position="831"/>
        <end position="836"/>
    </location>
</feature>
<feature type="helix" evidence="14">
    <location>
        <begin position="838"/>
        <end position="840"/>
    </location>
</feature>
<feature type="strand" evidence="14">
    <location>
        <begin position="842"/>
        <end position="854"/>
    </location>
</feature>
<feature type="strand" evidence="14">
    <location>
        <begin position="856"/>
        <end position="860"/>
    </location>
</feature>
<feature type="strand" evidence="14">
    <location>
        <begin position="862"/>
        <end position="867"/>
    </location>
</feature>
<feature type="strand" evidence="14">
    <location>
        <begin position="891"/>
        <end position="894"/>
    </location>
</feature>
<feature type="strand" evidence="14">
    <location>
        <begin position="897"/>
        <end position="900"/>
    </location>
</feature>
<feature type="helix" evidence="14">
    <location>
        <begin position="903"/>
        <end position="912"/>
    </location>
</feature>
<feature type="strand" evidence="14">
    <location>
        <begin position="916"/>
        <end position="925"/>
    </location>
</feature>
<evidence type="ECO:0000255" key="1">
    <source>
        <dbReference type="PROSITE-ProRule" id="PRU10092"/>
    </source>
</evidence>
<evidence type="ECO:0000255" key="2">
    <source>
        <dbReference type="PROSITE-ProRule" id="PRU10093"/>
    </source>
</evidence>
<evidence type="ECO:0000256" key="3">
    <source>
        <dbReference type="SAM" id="MobiDB-lite"/>
    </source>
</evidence>
<evidence type="ECO:0000269" key="4">
    <source>
    </source>
</evidence>
<evidence type="ECO:0000269" key="5">
    <source>
    </source>
</evidence>
<evidence type="ECO:0000269" key="6">
    <source>
    </source>
</evidence>
<evidence type="ECO:0000269" key="7">
    <source>
    </source>
</evidence>
<evidence type="ECO:0000269" key="8">
    <source>
    </source>
</evidence>
<evidence type="ECO:0000269" key="9">
    <source>
    </source>
</evidence>
<evidence type="ECO:0000303" key="10">
    <source>
    </source>
</evidence>
<evidence type="ECO:0000305" key="11"/>
<evidence type="ECO:0007744" key="12">
    <source>
    </source>
</evidence>
<evidence type="ECO:0007744" key="13">
    <source>
    </source>
</evidence>
<evidence type="ECO:0007829" key="14">
    <source>
        <dbReference type="PDB" id="5TXK"/>
    </source>
</evidence>
<gene>
    <name type="primary">USP35</name>
    <name type="synonym">KIAA1372</name>
    <name type="synonym">USP34</name>
</gene>
<sequence length="1018" mass="113405">MDKILEAVVTSSYPVSVKQGLVRRVLEAARQPLEREQCLALLALGARLYVGGAEELPRRVGCQLLHVAGRHHPDVFAEFFSARRVLRLLQGGAGPPGPRALACVQLGLQLLPEGPAADEVFALLRREVLRTVCERPGPAACAQVARLLARHPRCVPDGPHRLLFCQQLVRCLGRFRCPAEGEEGAVEFLEQAQQVSGLLAQLWRAQPAAILPCLKELFAVISCAEEEPPSSALASVVQHLPLELMDGVVRNLSNDDSVTDSQMLTAISRMIDWVSWPLGKNIDKWIIALLKGLAAVKKFSILIEVSLTKIEKVFSKLLYPIVRGAALSVLKYMLLTFQHSHEAFHLLLPHIPPMVASLVKEDSNSGTSCLEQLAELVHCMVFRFPGFPDLYEPVMEAIKDLHVPNEDRIKQLLGQDAWTSQKSELAGFYPRLMAKSDTGKIGLINLGNTCYVNSILQALFMASDFRHCVLRLTENNSQPLMTKLQWLFGFLEHSQRPAISPENFLSASWTPWFSPGTQQDCSEYLKYLLDRLHEEEKTGTRICQKLKQSSSPSPPEEPPAPSSTSVEKMFGGKIVTRICCLCCLNVSSREEAFTDLSLAFPPPERCRRRRLGSVMRPTEDITARELPPPTSAQGPGRVGPRRQRKHCITEDTPPTSLYIEGLDSKEAGGQSSQEERIEREEEGKEERTEKEEVGEEEESTRGEGEREKEEEVEEEEEKVEKETEKEAEQEKEEDSLGAGTHPDAAIPSGERTCGSEGSRSVLDLVNYFLSPEKLTAENRYYCESCASLQDAEKVVELSQGPCYLILTLLRFSFDLRTMRRRKILDDVSIPLLLRLPLAGGRGQAYDLCSVVVHSGVSSESGHYYCYAREGAARPAASLGTADRPEPENQWYLFNDTRVSFSSFESVSNVTSFFPKDTAYVLFYRQRPREGPEAELGSSRVRTEPTLHKDLMEAISKDNILYLQEQEKEARSRAAYISALPTSPHWGRGFDEDKDEDEGSPGGCNPAGGNGGDFHRLVF</sequence>
<reference key="1">
    <citation type="journal article" date="2004" name="Biochem. Biophys. Res. Commun.">
        <title>Cloning and enzymatic analysis of 22 novel human ubiquitin-specific proteases.</title>
        <authorList>
            <person name="Quesada V."/>
            <person name="Diaz-Perales A."/>
            <person name="Gutierrez-Fernandez A."/>
            <person name="Garabaya C."/>
            <person name="Cal S."/>
            <person name="Lopez-Otin C."/>
        </authorList>
    </citation>
    <scope>NUCLEOTIDE SEQUENCE [MRNA] (ISOFORM 1)</scope>
    <scope>CATALYTIC ACTIVITY</scope>
    <scope>TISSUE SPECIFICITY</scope>
</reference>
<reference key="2">
    <citation type="journal article" date="2000" name="DNA Res.">
        <title>Prediction of the coding sequences of unidentified human genes. XVI. The complete sequences of 150 new cDNA clones from brain which code for large proteins in vitro.</title>
        <authorList>
            <person name="Nagase T."/>
            <person name="Kikuno R."/>
            <person name="Ishikawa K."/>
            <person name="Hirosawa M."/>
            <person name="Ohara O."/>
        </authorList>
    </citation>
    <scope>NUCLEOTIDE SEQUENCE [LARGE SCALE MRNA] (ISOFORM 2)</scope>
    <source>
        <tissue>Brain</tissue>
    </source>
</reference>
<reference key="3">
    <citation type="journal article" date="2006" name="Nature">
        <title>Human chromosome 11 DNA sequence and analysis including novel gene identification.</title>
        <authorList>
            <person name="Taylor T.D."/>
            <person name="Noguchi H."/>
            <person name="Totoki Y."/>
            <person name="Toyoda A."/>
            <person name="Kuroki Y."/>
            <person name="Dewar K."/>
            <person name="Lloyd C."/>
            <person name="Itoh T."/>
            <person name="Takeda T."/>
            <person name="Kim D.-W."/>
            <person name="She X."/>
            <person name="Barlow K.F."/>
            <person name="Bloom T."/>
            <person name="Bruford E."/>
            <person name="Chang J.L."/>
            <person name="Cuomo C.A."/>
            <person name="Eichler E."/>
            <person name="FitzGerald M.G."/>
            <person name="Jaffe D.B."/>
            <person name="LaButti K."/>
            <person name="Nicol R."/>
            <person name="Park H.-S."/>
            <person name="Seaman C."/>
            <person name="Sougnez C."/>
            <person name="Yang X."/>
            <person name="Zimmer A.R."/>
            <person name="Zody M.C."/>
            <person name="Birren B.W."/>
            <person name="Nusbaum C."/>
            <person name="Fujiyama A."/>
            <person name="Hattori M."/>
            <person name="Rogers J."/>
            <person name="Lander E.S."/>
            <person name="Sakaki Y."/>
        </authorList>
    </citation>
    <scope>NUCLEOTIDE SEQUENCE [LARGE SCALE GENOMIC DNA]</scope>
</reference>
<reference key="4">
    <citation type="journal article" date="2008" name="Proc. Natl. Acad. Sci. U.S.A.">
        <title>A quantitative atlas of mitotic phosphorylation.</title>
        <authorList>
            <person name="Dephoure N."/>
            <person name="Zhou C."/>
            <person name="Villen J."/>
            <person name="Beausoleil S.A."/>
            <person name="Bakalarski C.E."/>
            <person name="Elledge S.J."/>
            <person name="Gygi S.P."/>
        </authorList>
    </citation>
    <scope>PHOSPHORYLATION [LARGE SCALE ANALYSIS] AT SER-613</scope>
    <scope>IDENTIFICATION BY MASS SPECTROMETRY [LARGE SCALE ANALYSIS]</scope>
    <source>
        <tissue>Cervix carcinoma</tissue>
    </source>
</reference>
<reference key="5">
    <citation type="journal article" date="2013" name="J. Proteome Res.">
        <title>Toward a comprehensive characterization of a human cancer cell phosphoproteome.</title>
        <authorList>
            <person name="Zhou H."/>
            <person name="Di Palma S."/>
            <person name="Preisinger C."/>
            <person name="Peng M."/>
            <person name="Polat A.N."/>
            <person name="Heck A.J."/>
            <person name="Mohammed S."/>
        </authorList>
    </citation>
    <scope>PHOSPHORYLATION [LARGE SCALE ANALYSIS] AT SER-613</scope>
    <scope>IDENTIFICATION BY MASS SPECTROMETRY [LARGE SCALE ANALYSIS]</scope>
    <source>
        <tissue>Cervix carcinoma</tissue>
        <tissue>Erythroleukemia</tissue>
    </source>
</reference>
<reference key="6">
    <citation type="journal article" date="2015" name="Autophagy">
        <title>Deubiquitinating enzymes regulate PARK2-mediated mitophagy.</title>
        <authorList>
            <person name="Wang Y."/>
            <person name="Serricchio M."/>
            <person name="Jauregui M."/>
            <person name="Shanbhag R."/>
            <person name="Stoltz T."/>
            <person name="Di Paolo C.T."/>
            <person name="Kim P.K."/>
            <person name="McQuibban G.A."/>
        </authorList>
    </citation>
    <scope>FUNCTION</scope>
    <scope>SUBCELLULAR LOCATION</scope>
</reference>
<reference key="7">
    <citation type="journal article" date="2015" name="Oncotarget">
        <title>USP35 activated by miR let-7a inhibits cell proliferation and NF-kappaB activation through stabilization of ABIN-2.</title>
        <authorList>
            <person name="Liu C."/>
            <person name="Wang L."/>
            <person name="Chen W."/>
            <person name="Zhao S."/>
            <person name="Yin C."/>
            <person name="Lin Y."/>
            <person name="Jiang A."/>
            <person name="Zhang P."/>
        </authorList>
    </citation>
    <scope>FUNCTION</scope>
    <scope>CATALYTIC ACTIVITY</scope>
    <scope>MUTAGENESIS OF CYS-450</scope>
</reference>
<reference key="8">
    <citation type="journal article" date="2018" name="Nat. Commun.">
        <title>USP35 regulates mitotic progression by modulating the stability of Aurora B.</title>
        <authorList>
            <person name="Park J."/>
            <person name="Kwon M.S."/>
            <person name="Kim E.E."/>
            <person name="Lee H."/>
            <person name="Song E.J."/>
        </authorList>
    </citation>
    <scope>FUNCTION</scope>
    <scope>CATALYTIC ACTIVITY</scope>
    <scope>MUTAGENESIS OF CYS-450</scope>
    <scope>INDUCTION BY FOXM1</scope>
</reference>
<reference key="9">
    <citation type="journal article" date="2021" name="Biochem. Biophys. Res. Commun.">
        <title>Regulation of survivin protein stability by USP35 is evolutionarily conserved.</title>
        <authorList>
            <person name="Wang W."/>
            <person name="Lin H."/>
            <person name="Zheng E."/>
            <person name="Hou Z."/>
            <person name="Liu Y."/>
            <person name="Huang W."/>
            <person name="Chen D."/>
            <person name="Feng J."/>
            <person name="Li J."/>
            <person name="Li L."/>
        </authorList>
    </citation>
    <scope>FUNCTION</scope>
    <scope>CATALYTIC ACTIVITY</scope>
    <scope>MUTAGENESIS OF CYS-450</scope>
</reference>
<reference key="10">
    <citation type="journal article" date="2023" name="Cell. Mol. Life Sci.">
        <title>USP35 dimer prevents its degradation by E3 ligase CHIP through auto-deubiquitinating activity.</title>
        <authorList>
            <person name="Park J."/>
            <person name="Shin S.C."/>
            <person name="Jin K.S."/>
            <person name="Lim M.J."/>
            <person name="Kim Y."/>
            <person name="Kim E.E."/>
            <person name="Song E.J."/>
        </authorList>
    </citation>
    <scope>FUNCTION</scope>
    <scope>CATALYTIC ACTIVITY</scope>
    <scope>SUBUNIT</scope>
    <scope>UBIQUITINATION</scope>
    <scope>MUTAGENESIS OF CYS-450</scope>
    <scope>INTERACTION WITH HSP90AA1</scope>
</reference>
<protein>
    <recommendedName>
        <fullName>Ubiquitin carboxyl-terminal hydrolase 35</fullName>
        <ecNumber evidence="6 8 9">3.4.19.12</ecNumber>
    </recommendedName>
    <alternativeName>
        <fullName>Deubiquitinating enzyme 35</fullName>
    </alternativeName>
    <alternativeName>
        <fullName>Ubiquitin thioesterase 35</fullName>
    </alternativeName>
    <alternativeName>
        <fullName>Ubiquitin-specific-processing protease 35</fullName>
    </alternativeName>
</protein>
<dbReference type="EC" id="3.4.19.12" evidence="6 8 9"/>
<dbReference type="EMBL" id="AJ586137">
    <property type="protein sequence ID" value="CAE51937.1"/>
    <property type="molecule type" value="mRNA"/>
</dbReference>
<dbReference type="EMBL" id="AB037793">
    <property type="protein sequence ID" value="BAA92610.1"/>
    <property type="status" value="ALT_INIT"/>
    <property type="molecule type" value="mRNA"/>
</dbReference>
<dbReference type="EMBL" id="AP002985">
    <property type="status" value="NOT_ANNOTATED_CDS"/>
    <property type="molecule type" value="Genomic_DNA"/>
</dbReference>
<dbReference type="CCDS" id="CCDS41693.1">
    <molecule id="Q9P2H5-1"/>
</dbReference>
<dbReference type="RefSeq" id="NP_065849.1">
    <molecule id="Q9P2H5-1"/>
    <property type="nucleotide sequence ID" value="NM_020798.4"/>
</dbReference>
<dbReference type="RefSeq" id="XP_011543489.1">
    <molecule id="Q9P2H5-2"/>
    <property type="nucleotide sequence ID" value="XM_011545187.3"/>
</dbReference>
<dbReference type="RefSeq" id="XP_011543490.1">
    <molecule id="Q9P2H5-2"/>
    <property type="nucleotide sequence ID" value="XM_011545188.3"/>
</dbReference>
<dbReference type="RefSeq" id="XP_016873541.1">
    <property type="nucleotide sequence ID" value="XM_017018052.1"/>
</dbReference>
<dbReference type="RefSeq" id="XP_047283288.1">
    <molecule id="Q9P2H5-1"/>
    <property type="nucleotide sequence ID" value="XM_047427332.1"/>
</dbReference>
<dbReference type="RefSeq" id="XP_047283290.1">
    <molecule id="Q9P2H5-1"/>
    <property type="nucleotide sequence ID" value="XM_047427334.1"/>
</dbReference>
<dbReference type="RefSeq" id="XP_047283291.1">
    <molecule id="Q9P2H5-1"/>
    <property type="nucleotide sequence ID" value="XM_047427335.1"/>
</dbReference>
<dbReference type="PDB" id="5TXK">
    <property type="method" value="X-ray"/>
    <property type="resolution" value="1.84 A"/>
    <property type="chains" value="A=423-944"/>
</dbReference>
<dbReference type="PDB" id="7Q44">
    <property type="method" value="X-ray"/>
    <property type="resolution" value="2.20 A"/>
    <property type="chains" value="B/D/F=988-1002"/>
</dbReference>
<dbReference type="PDBsum" id="5TXK"/>
<dbReference type="PDBsum" id="7Q44"/>
<dbReference type="SMR" id="Q9P2H5"/>
<dbReference type="BioGRID" id="121613">
    <property type="interactions" value="30"/>
</dbReference>
<dbReference type="FunCoup" id="Q9P2H5">
    <property type="interactions" value="1242"/>
</dbReference>
<dbReference type="IntAct" id="Q9P2H5">
    <property type="interactions" value="6"/>
</dbReference>
<dbReference type="STRING" id="9606.ENSP00000431876"/>
<dbReference type="BindingDB" id="Q9P2H5"/>
<dbReference type="ChEMBL" id="CHEMBL4630862"/>
<dbReference type="MEROPS" id="C19.059"/>
<dbReference type="GlyGen" id="Q9P2H5">
    <property type="glycosylation" value="1 site, 1 O-linked glycan (1 site)"/>
</dbReference>
<dbReference type="iPTMnet" id="Q9P2H5"/>
<dbReference type="PhosphoSitePlus" id="Q9P2H5"/>
<dbReference type="BioMuta" id="USP35"/>
<dbReference type="jPOST" id="Q9P2H5"/>
<dbReference type="MassIVE" id="Q9P2H5"/>
<dbReference type="PaxDb" id="9606-ENSP00000431876"/>
<dbReference type="PeptideAtlas" id="Q9P2H5"/>
<dbReference type="ProteomicsDB" id="83817">
    <molecule id="Q9P2H5-1"/>
</dbReference>
<dbReference type="ProteomicsDB" id="83818">
    <molecule id="Q9P2H5-2"/>
</dbReference>
<dbReference type="Antibodypedia" id="31304">
    <property type="antibodies" value="83 antibodies from 22 providers"/>
</dbReference>
<dbReference type="DNASU" id="57558"/>
<dbReference type="Ensembl" id="ENST00000526425.1">
    <molecule id="Q9P2H5-2"/>
    <property type="protein sequence ID" value="ENSP00000434942.1"/>
    <property type="gene ID" value="ENSG00000118369.13"/>
</dbReference>
<dbReference type="Ensembl" id="ENST00000529308.6">
    <molecule id="Q9P2H5-1"/>
    <property type="protein sequence ID" value="ENSP00000431876.1"/>
    <property type="gene ID" value="ENSG00000118369.13"/>
</dbReference>
<dbReference type="GeneID" id="57558"/>
<dbReference type="KEGG" id="hsa:57558"/>
<dbReference type="MANE-Select" id="ENST00000529308.6">
    <property type="protein sequence ID" value="ENSP00000431876.1"/>
    <property type="RefSeq nucleotide sequence ID" value="NM_020798.4"/>
    <property type="RefSeq protein sequence ID" value="NP_065849.1"/>
</dbReference>
<dbReference type="UCSC" id="uc001ozf.4">
    <molecule id="Q9P2H5-1"/>
    <property type="organism name" value="human"/>
</dbReference>
<dbReference type="AGR" id="HGNC:20061"/>
<dbReference type="CTD" id="57558"/>
<dbReference type="DisGeNET" id="57558"/>
<dbReference type="GeneCards" id="USP35"/>
<dbReference type="HGNC" id="HGNC:20061">
    <property type="gene designation" value="USP35"/>
</dbReference>
<dbReference type="HPA" id="ENSG00000118369">
    <property type="expression patterns" value="Low tissue specificity"/>
</dbReference>
<dbReference type="MIM" id="620959">
    <property type="type" value="gene"/>
</dbReference>
<dbReference type="neXtProt" id="NX_Q9P2H5"/>
<dbReference type="OpenTargets" id="ENSG00000118369"/>
<dbReference type="PharmGKB" id="PA134883706"/>
<dbReference type="VEuPathDB" id="HostDB:ENSG00000118369"/>
<dbReference type="eggNOG" id="KOG1864">
    <property type="taxonomic scope" value="Eukaryota"/>
</dbReference>
<dbReference type="GeneTree" id="ENSGT00940000160942"/>
<dbReference type="HOGENOM" id="CLU_010910_0_0_1"/>
<dbReference type="InParanoid" id="Q9P2H5"/>
<dbReference type="OMA" id="YKMCGRS"/>
<dbReference type="OrthoDB" id="2420415at2759"/>
<dbReference type="PAN-GO" id="Q9P2H5">
    <property type="GO annotations" value="5 GO annotations based on evolutionary models"/>
</dbReference>
<dbReference type="PhylomeDB" id="Q9P2H5"/>
<dbReference type="TreeFam" id="TF324529"/>
<dbReference type="PathwayCommons" id="Q9P2H5"/>
<dbReference type="SignaLink" id="Q9P2H5"/>
<dbReference type="BioGRID-ORCS" id="57558">
    <property type="hits" value="24 hits in 1156 CRISPR screens"/>
</dbReference>
<dbReference type="ChiTaRS" id="USP35">
    <property type="organism name" value="human"/>
</dbReference>
<dbReference type="GenomeRNAi" id="57558"/>
<dbReference type="Pharos" id="Q9P2H5">
    <property type="development level" value="Tbio"/>
</dbReference>
<dbReference type="PRO" id="PR:Q9P2H5"/>
<dbReference type="Proteomes" id="UP000005640">
    <property type="component" value="Chromosome 11"/>
</dbReference>
<dbReference type="RNAct" id="Q9P2H5">
    <property type="molecule type" value="protein"/>
</dbReference>
<dbReference type="Bgee" id="ENSG00000118369">
    <property type="expression patterns" value="Expressed in secondary oocyte and 116 other cell types or tissues"/>
</dbReference>
<dbReference type="ExpressionAtlas" id="Q9P2H5">
    <property type="expression patterns" value="baseline and differential"/>
</dbReference>
<dbReference type="GO" id="GO:0005829">
    <property type="term" value="C:cytosol"/>
    <property type="evidence" value="ECO:0000318"/>
    <property type="project" value="GO_Central"/>
</dbReference>
<dbReference type="GO" id="GO:0005739">
    <property type="term" value="C:mitochondrion"/>
    <property type="evidence" value="ECO:0007669"/>
    <property type="project" value="UniProtKB-SubCell"/>
</dbReference>
<dbReference type="GO" id="GO:0005634">
    <property type="term" value="C:nucleus"/>
    <property type="evidence" value="ECO:0000318"/>
    <property type="project" value="GO_Central"/>
</dbReference>
<dbReference type="GO" id="GO:0004843">
    <property type="term" value="F:cysteine-type deubiquitinase activity"/>
    <property type="evidence" value="ECO:0000314"/>
    <property type="project" value="FlyBase"/>
</dbReference>
<dbReference type="GO" id="GO:0016579">
    <property type="term" value="P:protein deubiquitination"/>
    <property type="evidence" value="ECO:0007669"/>
    <property type="project" value="InterPro"/>
</dbReference>
<dbReference type="GO" id="GO:0006508">
    <property type="term" value="P:proteolysis"/>
    <property type="evidence" value="ECO:0007669"/>
    <property type="project" value="UniProtKB-KW"/>
</dbReference>
<dbReference type="GO" id="GO:0031647">
    <property type="term" value="P:regulation of protein stability"/>
    <property type="evidence" value="ECO:0000318"/>
    <property type="project" value="GO_Central"/>
</dbReference>
<dbReference type="FunFam" id="3.90.70.10:FF:000106">
    <property type="entry name" value="Ubiquitin carboxyl-terminal hydrolase 35"/>
    <property type="match status" value="1"/>
</dbReference>
<dbReference type="FunFam" id="3.90.70.10:FF:000094">
    <property type="entry name" value="ubiquitin carboxyl-terminal hydrolase 35"/>
    <property type="match status" value="1"/>
</dbReference>
<dbReference type="Gene3D" id="3.90.70.10">
    <property type="entry name" value="Cysteine proteinases"/>
    <property type="match status" value="2"/>
</dbReference>
<dbReference type="InterPro" id="IPR016024">
    <property type="entry name" value="ARM-type_fold"/>
</dbReference>
<dbReference type="InterPro" id="IPR038765">
    <property type="entry name" value="Papain-like_cys_pep_sf"/>
</dbReference>
<dbReference type="InterPro" id="IPR050164">
    <property type="entry name" value="Peptidase_C19"/>
</dbReference>
<dbReference type="InterPro" id="IPR001394">
    <property type="entry name" value="Peptidase_C19_UCH"/>
</dbReference>
<dbReference type="InterPro" id="IPR049407">
    <property type="entry name" value="Usp38-like_N"/>
</dbReference>
<dbReference type="InterPro" id="IPR018200">
    <property type="entry name" value="USP_CS"/>
</dbReference>
<dbReference type="InterPro" id="IPR028889">
    <property type="entry name" value="USP_dom"/>
</dbReference>
<dbReference type="PANTHER" id="PTHR24006">
    <property type="entry name" value="UBIQUITIN CARBOXYL-TERMINAL HYDROLASE"/>
    <property type="match status" value="1"/>
</dbReference>
<dbReference type="PANTHER" id="PTHR24006:SF660">
    <property type="entry name" value="UBIQUITIN CARBOXYL-TERMINAL HYDROLASE 35"/>
    <property type="match status" value="1"/>
</dbReference>
<dbReference type="Pfam" id="PF00443">
    <property type="entry name" value="UCH"/>
    <property type="match status" value="1"/>
</dbReference>
<dbReference type="Pfam" id="PF21246">
    <property type="entry name" value="Usp38-like_N"/>
    <property type="match status" value="1"/>
</dbReference>
<dbReference type="SUPFAM" id="SSF48371">
    <property type="entry name" value="ARM repeat"/>
    <property type="match status" value="1"/>
</dbReference>
<dbReference type="SUPFAM" id="SSF54001">
    <property type="entry name" value="Cysteine proteinases"/>
    <property type="match status" value="1"/>
</dbReference>
<dbReference type="PROSITE" id="PS00972">
    <property type="entry name" value="USP_1"/>
    <property type="match status" value="1"/>
</dbReference>
<dbReference type="PROSITE" id="PS00973">
    <property type="entry name" value="USP_2"/>
    <property type="match status" value="1"/>
</dbReference>
<dbReference type="PROSITE" id="PS50235">
    <property type="entry name" value="USP_3"/>
    <property type="match status" value="1"/>
</dbReference>